<organism>
    <name type="scientific">Methylobacterium sp. (strain 4-46)</name>
    <dbReference type="NCBI Taxonomy" id="426117"/>
    <lineage>
        <taxon>Bacteria</taxon>
        <taxon>Pseudomonadati</taxon>
        <taxon>Pseudomonadota</taxon>
        <taxon>Alphaproteobacteria</taxon>
        <taxon>Hyphomicrobiales</taxon>
        <taxon>Methylobacteriaceae</taxon>
        <taxon>Methylobacterium</taxon>
    </lineage>
</organism>
<evidence type="ECO:0000255" key="1">
    <source>
        <dbReference type="HAMAP-Rule" id="MF_00004"/>
    </source>
</evidence>
<protein>
    <recommendedName>
        <fullName evidence="1">Adenine phosphoribosyltransferase</fullName>
        <shortName evidence="1">APRT</shortName>
        <ecNumber evidence="1">2.4.2.7</ecNumber>
    </recommendedName>
</protein>
<proteinExistence type="inferred from homology"/>
<reference key="1">
    <citation type="submission" date="2008-02" db="EMBL/GenBank/DDBJ databases">
        <title>Complete sequence of chromosome of Methylobacterium sp. 4-46.</title>
        <authorList>
            <consortium name="US DOE Joint Genome Institute"/>
            <person name="Copeland A."/>
            <person name="Lucas S."/>
            <person name="Lapidus A."/>
            <person name="Glavina del Rio T."/>
            <person name="Dalin E."/>
            <person name="Tice H."/>
            <person name="Bruce D."/>
            <person name="Goodwin L."/>
            <person name="Pitluck S."/>
            <person name="Chertkov O."/>
            <person name="Brettin T."/>
            <person name="Detter J.C."/>
            <person name="Han C."/>
            <person name="Kuske C.R."/>
            <person name="Schmutz J."/>
            <person name="Larimer F."/>
            <person name="Land M."/>
            <person name="Hauser L."/>
            <person name="Kyrpides N."/>
            <person name="Ivanova N."/>
            <person name="Marx C.J."/>
            <person name="Richardson P."/>
        </authorList>
    </citation>
    <scope>NUCLEOTIDE SEQUENCE [LARGE SCALE GENOMIC DNA]</scope>
    <source>
        <strain>4-46</strain>
    </source>
</reference>
<gene>
    <name evidence="1" type="primary">apt</name>
    <name type="ordered locus">M446_6008</name>
</gene>
<keyword id="KW-0963">Cytoplasm</keyword>
<keyword id="KW-0328">Glycosyltransferase</keyword>
<keyword id="KW-0660">Purine salvage</keyword>
<keyword id="KW-0808">Transferase</keyword>
<comment type="function">
    <text evidence="1">Catalyzes a salvage reaction resulting in the formation of AMP, that is energically less costly than de novo synthesis.</text>
</comment>
<comment type="catalytic activity">
    <reaction evidence="1">
        <text>AMP + diphosphate = 5-phospho-alpha-D-ribose 1-diphosphate + adenine</text>
        <dbReference type="Rhea" id="RHEA:16609"/>
        <dbReference type="ChEBI" id="CHEBI:16708"/>
        <dbReference type="ChEBI" id="CHEBI:33019"/>
        <dbReference type="ChEBI" id="CHEBI:58017"/>
        <dbReference type="ChEBI" id="CHEBI:456215"/>
        <dbReference type="EC" id="2.4.2.7"/>
    </reaction>
</comment>
<comment type="pathway">
    <text evidence="1">Purine metabolism; AMP biosynthesis via salvage pathway; AMP from adenine: step 1/1.</text>
</comment>
<comment type="subunit">
    <text evidence="1">Homodimer.</text>
</comment>
<comment type="subcellular location">
    <subcellularLocation>
        <location evidence="1">Cytoplasm</location>
    </subcellularLocation>
</comment>
<comment type="similarity">
    <text evidence="1">Belongs to the purine/pyrimidine phosphoribosyltransferase family.</text>
</comment>
<dbReference type="EC" id="2.4.2.7" evidence="1"/>
<dbReference type="EMBL" id="CP000943">
    <property type="protein sequence ID" value="ACA20285.1"/>
    <property type="molecule type" value="Genomic_DNA"/>
</dbReference>
<dbReference type="RefSeq" id="WP_012335663.1">
    <property type="nucleotide sequence ID" value="NC_010511.1"/>
</dbReference>
<dbReference type="SMR" id="B0UKF2"/>
<dbReference type="STRING" id="426117.M446_6008"/>
<dbReference type="KEGG" id="met:M446_6008"/>
<dbReference type="eggNOG" id="COG0503">
    <property type="taxonomic scope" value="Bacteria"/>
</dbReference>
<dbReference type="HOGENOM" id="CLU_063339_3_0_5"/>
<dbReference type="UniPathway" id="UPA00588">
    <property type="reaction ID" value="UER00646"/>
</dbReference>
<dbReference type="GO" id="GO:0005737">
    <property type="term" value="C:cytoplasm"/>
    <property type="evidence" value="ECO:0007669"/>
    <property type="project" value="UniProtKB-SubCell"/>
</dbReference>
<dbReference type="GO" id="GO:0002055">
    <property type="term" value="F:adenine binding"/>
    <property type="evidence" value="ECO:0007669"/>
    <property type="project" value="TreeGrafter"/>
</dbReference>
<dbReference type="GO" id="GO:0003999">
    <property type="term" value="F:adenine phosphoribosyltransferase activity"/>
    <property type="evidence" value="ECO:0007669"/>
    <property type="project" value="UniProtKB-UniRule"/>
</dbReference>
<dbReference type="GO" id="GO:0016208">
    <property type="term" value="F:AMP binding"/>
    <property type="evidence" value="ECO:0007669"/>
    <property type="project" value="TreeGrafter"/>
</dbReference>
<dbReference type="GO" id="GO:0006168">
    <property type="term" value="P:adenine salvage"/>
    <property type="evidence" value="ECO:0007669"/>
    <property type="project" value="InterPro"/>
</dbReference>
<dbReference type="GO" id="GO:0044209">
    <property type="term" value="P:AMP salvage"/>
    <property type="evidence" value="ECO:0007669"/>
    <property type="project" value="UniProtKB-UniRule"/>
</dbReference>
<dbReference type="GO" id="GO:0006166">
    <property type="term" value="P:purine ribonucleoside salvage"/>
    <property type="evidence" value="ECO:0007669"/>
    <property type="project" value="UniProtKB-KW"/>
</dbReference>
<dbReference type="CDD" id="cd06223">
    <property type="entry name" value="PRTases_typeI"/>
    <property type="match status" value="1"/>
</dbReference>
<dbReference type="FunFam" id="3.40.50.2020:FF:000021">
    <property type="entry name" value="Adenine phosphoribosyltransferase"/>
    <property type="match status" value="1"/>
</dbReference>
<dbReference type="Gene3D" id="3.40.50.2020">
    <property type="match status" value="1"/>
</dbReference>
<dbReference type="HAMAP" id="MF_00004">
    <property type="entry name" value="Aden_phosphoribosyltr"/>
    <property type="match status" value="1"/>
</dbReference>
<dbReference type="InterPro" id="IPR005764">
    <property type="entry name" value="Ade_phspho_trans"/>
</dbReference>
<dbReference type="InterPro" id="IPR000836">
    <property type="entry name" value="PRibTrfase_dom"/>
</dbReference>
<dbReference type="InterPro" id="IPR029057">
    <property type="entry name" value="PRTase-like"/>
</dbReference>
<dbReference type="InterPro" id="IPR050054">
    <property type="entry name" value="UPRTase/APRTase"/>
</dbReference>
<dbReference type="NCBIfam" id="TIGR01090">
    <property type="entry name" value="apt"/>
    <property type="match status" value="1"/>
</dbReference>
<dbReference type="NCBIfam" id="NF002634">
    <property type="entry name" value="PRK02304.1-3"/>
    <property type="match status" value="1"/>
</dbReference>
<dbReference type="NCBIfam" id="NF002636">
    <property type="entry name" value="PRK02304.1-5"/>
    <property type="match status" value="1"/>
</dbReference>
<dbReference type="PANTHER" id="PTHR32315">
    <property type="entry name" value="ADENINE PHOSPHORIBOSYLTRANSFERASE"/>
    <property type="match status" value="1"/>
</dbReference>
<dbReference type="PANTHER" id="PTHR32315:SF3">
    <property type="entry name" value="ADENINE PHOSPHORIBOSYLTRANSFERASE"/>
    <property type="match status" value="1"/>
</dbReference>
<dbReference type="Pfam" id="PF00156">
    <property type="entry name" value="Pribosyltran"/>
    <property type="match status" value="1"/>
</dbReference>
<dbReference type="SUPFAM" id="SSF53271">
    <property type="entry name" value="PRTase-like"/>
    <property type="match status" value="1"/>
</dbReference>
<dbReference type="PROSITE" id="PS00103">
    <property type="entry name" value="PUR_PYR_PR_TRANSFER"/>
    <property type="match status" value="1"/>
</dbReference>
<name>APT_METS4</name>
<sequence>MDPRTLSALKDAIRSIPDYPKPGIVFRDITTLLGDPGAFRRAVDALVHPFAGGRIDRVAGIEARGFILGGAVAHQLSSGFVPIRKKGKLPHTTVSIAYALEYGTDEMEIHSDAVKPGDRVVLVDDLIATGGTAEAAVNLLRQIGAEVVAACFVIDLPALGGAARLRALDVPVFTLVEFEGH</sequence>
<feature type="chain" id="PRO_1000116180" description="Adenine phosphoribosyltransferase">
    <location>
        <begin position="1"/>
        <end position="181"/>
    </location>
</feature>
<accession>B0UKF2</accession>